<protein>
    <recommendedName>
        <fullName evidence="1">Chromophore lyase CpcT/CpeT 1</fullName>
        <ecNumber evidence="1">4.-.-.-</ecNumber>
    </recommendedName>
</protein>
<proteinExistence type="inferred from homology"/>
<evidence type="ECO:0000255" key="1">
    <source>
        <dbReference type="HAMAP-Rule" id="MF_01460"/>
    </source>
</evidence>
<feature type="chain" id="PRO_0000403153" description="Chromophore lyase CpcT/CpeT 1">
    <location>
        <begin position="1"/>
        <end position="229"/>
    </location>
</feature>
<organism>
    <name type="scientific">Gloeobacter violaceus (strain ATCC 29082 / PCC 7421)</name>
    <dbReference type="NCBI Taxonomy" id="251221"/>
    <lineage>
        <taxon>Bacteria</taxon>
        <taxon>Bacillati</taxon>
        <taxon>Cyanobacteriota</taxon>
        <taxon>Cyanophyceae</taxon>
        <taxon>Gloeobacterales</taxon>
        <taxon>Gloeobacteraceae</taxon>
        <taxon>Gloeobacter</taxon>
    </lineage>
</organism>
<reference key="1">
    <citation type="journal article" date="2003" name="DNA Res.">
        <title>Complete genome structure of Gloeobacter violaceus PCC 7421, a cyanobacterium that lacks thylakoids.</title>
        <authorList>
            <person name="Nakamura Y."/>
            <person name="Kaneko T."/>
            <person name="Sato S."/>
            <person name="Mimuro M."/>
            <person name="Miyashita H."/>
            <person name="Tsuchiya T."/>
            <person name="Sasamoto S."/>
            <person name="Watanabe A."/>
            <person name="Kawashima K."/>
            <person name="Kishida Y."/>
            <person name="Kiyokawa C."/>
            <person name="Kohara M."/>
            <person name="Matsumoto M."/>
            <person name="Matsuno A."/>
            <person name="Nakazaki N."/>
            <person name="Shimpo S."/>
            <person name="Takeuchi C."/>
            <person name="Yamada M."/>
            <person name="Tabata S."/>
        </authorList>
    </citation>
    <scope>NUCLEOTIDE SEQUENCE [LARGE SCALE GENOMIC DNA]</scope>
    <source>
        <strain>ATCC 29082 / PCC 7421</strain>
    </source>
</reference>
<gene>
    <name evidence="1" type="primary">cpcT1</name>
    <name type="ordered locus">glr0438</name>
</gene>
<name>CPXT1_GLOVI</name>
<sequence length="229" mass="24834">MLSSGQSESLNQPMRMVICCLLLSTGLLAAVPSPAEQNALPATERQVEEVVTRLTGIMTTTQQAQSDAARPDVRMTTCSVQLEGDKSKAIYLYQEQTMSNNLGAPYRQRLLRIAASADGRAVESAGFKFVEAKPLAGLCAKPAAERLIAPMALDGDPTCTVRLVQAGDKYMGTTPEGGCQSNVRGAARITNEITLYKEGMDTRDRGFDAQGNQVWGAKEEPYRFRRLTP</sequence>
<comment type="function">
    <text evidence="1">Covalently attaches a chromophore to Cys residue(s) of phycobiliproteins.</text>
</comment>
<comment type="similarity">
    <text evidence="1">Belongs to the CpcT/CpeT biliprotein lyase family.</text>
</comment>
<dbReference type="EC" id="4.-.-.-" evidence="1"/>
<dbReference type="EMBL" id="BA000045">
    <property type="protein sequence ID" value="BAC88379.1"/>
    <property type="molecule type" value="Genomic_DNA"/>
</dbReference>
<dbReference type="RefSeq" id="NP_923384.1">
    <property type="nucleotide sequence ID" value="NC_005125.1"/>
</dbReference>
<dbReference type="SMR" id="Q7NNH3"/>
<dbReference type="STRING" id="251221.gene:10757910"/>
<dbReference type="EnsemblBacteria" id="BAC88379">
    <property type="protein sequence ID" value="BAC88379"/>
    <property type="gene ID" value="BAC88379"/>
</dbReference>
<dbReference type="KEGG" id="gvi:glr0438"/>
<dbReference type="PATRIC" id="fig|251221.4.peg.446"/>
<dbReference type="eggNOG" id="ENOG5032GGT">
    <property type="taxonomic scope" value="Bacteria"/>
</dbReference>
<dbReference type="HOGENOM" id="CLU_077016_0_0_3"/>
<dbReference type="InParanoid" id="Q7NNH3"/>
<dbReference type="OrthoDB" id="509115at2"/>
<dbReference type="PhylomeDB" id="Q7NNH3"/>
<dbReference type="Proteomes" id="UP000000557">
    <property type="component" value="Chromosome"/>
</dbReference>
<dbReference type="GO" id="GO:0016829">
    <property type="term" value="F:lyase activity"/>
    <property type="evidence" value="ECO:0007669"/>
    <property type="project" value="UniProtKB-KW"/>
</dbReference>
<dbReference type="CDD" id="cd16338">
    <property type="entry name" value="CpcT"/>
    <property type="match status" value="1"/>
</dbReference>
<dbReference type="Gene3D" id="2.40.128.590">
    <property type="entry name" value="CpcT/CpeT domain"/>
    <property type="match status" value="1"/>
</dbReference>
<dbReference type="HAMAP" id="MF_01460">
    <property type="entry name" value="Chrphore_lyase_CpxT"/>
    <property type="match status" value="1"/>
</dbReference>
<dbReference type="InterPro" id="IPR010404">
    <property type="entry name" value="CpcT/CpeT"/>
</dbReference>
<dbReference type="InterPro" id="IPR038672">
    <property type="entry name" value="CpcT/CpeT_sf"/>
</dbReference>
<dbReference type="PANTHER" id="PTHR35137">
    <property type="entry name" value="CHROMOPHORE LYASE CRL, CHLOROPLASTIC"/>
    <property type="match status" value="1"/>
</dbReference>
<dbReference type="PANTHER" id="PTHR35137:SF1">
    <property type="entry name" value="CHROMOPHORE LYASE CRL, CHLOROPLASTIC"/>
    <property type="match status" value="1"/>
</dbReference>
<dbReference type="Pfam" id="PF06206">
    <property type="entry name" value="CpeT"/>
    <property type="match status" value="1"/>
</dbReference>
<keyword id="KW-0456">Lyase</keyword>
<keyword id="KW-1185">Reference proteome</keyword>
<accession>Q7NNH3</accession>